<sequence length="184" mass="21198">MKNQKKLIILTGPSGVGKGTVIKEILGKDKNIWLSISATTREPREGEQEGENYYFLKQEKFKEMIEKNLFLEWAQFAGNYYGTPLSSVNEKITKGFTVLLEIEVEGAKQIKEKFPESLSIFLLPPDKAELERRIRNRGTEKEEAIKKRLLRASYEISASNQFDFELTNHNVDETAKRIIKLIQT</sequence>
<feature type="chain" id="PRO_0000266367" description="Guanylate kinase">
    <location>
        <begin position="1"/>
        <end position="184"/>
    </location>
</feature>
<feature type="domain" description="Guanylate kinase-like" evidence="1">
    <location>
        <begin position="5"/>
        <end position="183"/>
    </location>
</feature>
<feature type="binding site" evidence="1">
    <location>
        <begin position="12"/>
        <end position="19"/>
    </location>
    <ligand>
        <name>ATP</name>
        <dbReference type="ChEBI" id="CHEBI:30616"/>
    </ligand>
</feature>
<reference key="1">
    <citation type="journal article" date="2006" name="Science">
        <title>Genomic islands and the ecology and evolution of Prochlorococcus.</title>
        <authorList>
            <person name="Coleman M.L."/>
            <person name="Sullivan M.B."/>
            <person name="Martiny A.C."/>
            <person name="Steglich C."/>
            <person name="Barry K."/>
            <person name="Delong E.F."/>
            <person name="Chisholm S.W."/>
        </authorList>
    </citation>
    <scope>NUCLEOTIDE SEQUENCE [LARGE SCALE GENOMIC DNA]</scope>
    <source>
        <strain>MIT 9312</strain>
    </source>
</reference>
<gene>
    <name evidence="1" type="primary">gmk</name>
    <name type="ordered locus">PMT9312_0467</name>
</gene>
<keyword id="KW-0067">ATP-binding</keyword>
<keyword id="KW-0963">Cytoplasm</keyword>
<keyword id="KW-0418">Kinase</keyword>
<keyword id="KW-0547">Nucleotide-binding</keyword>
<keyword id="KW-0808">Transferase</keyword>
<comment type="function">
    <text evidence="1">Essential for recycling GMP and indirectly, cGMP.</text>
</comment>
<comment type="catalytic activity">
    <reaction evidence="1">
        <text>GMP + ATP = GDP + ADP</text>
        <dbReference type="Rhea" id="RHEA:20780"/>
        <dbReference type="ChEBI" id="CHEBI:30616"/>
        <dbReference type="ChEBI" id="CHEBI:58115"/>
        <dbReference type="ChEBI" id="CHEBI:58189"/>
        <dbReference type="ChEBI" id="CHEBI:456216"/>
        <dbReference type="EC" id="2.7.4.8"/>
    </reaction>
</comment>
<comment type="subcellular location">
    <subcellularLocation>
        <location evidence="1">Cytoplasm</location>
    </subcellularLocation>
</comment>
<comment type="similarity">
    <text evidence="1">Belongs to the guanylate kinase family.</text>
</comment>
<organism>
    <name type="scientific">Prochlorococcus marinus (strain MIT 9312)</name>
    <dbReference type="NCBI Taxonomy" id="74546"/>
    <lineage>
        <taxon>Bacteria</taxon>
        <taxon>Bacillati</taxon>
        <taxon>Cyanobacteriota</taxon>
        <taxon>Cyanophyceae</taxon>
        <taxon>Synechococcales</taxon>
        <taxon>Prochlorococcaceae</taxon>
        <taxon>Prochlorococcus</taxon>
    </lineage>
</organism>
<proteinExistence type="inferred from homology"/>
<accession>Q31C67</accession>
<dbReference type="EC" id="2.7.4.8" evidence="1"/>
<dbReference type="EMBL" id="CP000111">
    <property type="protein sequence ID" value="ABB49528.1"/>
    <property type="molecule type" value="Genomic_DNA"/>
</dbReference>
<dbReference type="RefSeq" id="WP_011376027.1">
    <property type="nucleotide sequence ID" value="NC_007577.1"/>
</dbReference>
<dbReference type="SMR" id="Q31C67"/>
<dbReference type="STRING" id="74546.PMT9312_0467"/>
<dbReference type="KEGG" id="pmi:PMT9312_0467"/>
<dbReference type="eggNOG" id="COG0194">
    <property type="taxonomic scope" value="Bacteria"/>
</dbReference>
<dbReference type="HOGENOM" id="CLU_001715_1_2_3"/>
<dbReference type="OrthoDB" id="9808150at2"/>
<dbReference type="Proteomes" id="UP000002715">
    <property type="component" value="Chromosome"/>
</dbReference>
<dbReference type="GO" id="GO:0005829">
    <property type="term" value="C:cytosol"/>
    <property type="evidence" value="ECO:0007669"/>
    <property type="project" value="TreeGrafter"/>
</dbReference>
<dbReference type="GO" id="GO:0005524">
    <property type="term" value="F:ATP binding"/>
    <property type="evidence" value="ECO:0007669"/>
    <property type="project" value="UniProtKB-UniRule"/>
</dbReference>
<dbReference type="GO" id="GO:0004385">
    <property type="term" value="F:guanylate kinase activity"/>
    <property type="evidence" value="ECO:0007669"/>
    <property type="project" value="UniProtKB-UniRule"/>
</dbReference>
<dbReference type="CDD" id="cd00071">
    <property type="entry name" value="GMPK"/>
    <property type="match status" value="1"/>
</dbReference>
<dbReference type="FunFam" id="3.30.63.10:FF:000002">
    <property type="entry name" value="Guanylate kinase 1"/>
    <property type="match status" value="1"/>
</dbReference>
<dbReference type="Gene3D" id="3.30.63.10">
    <property type="entry name" value="Guanylate Kinase phosphate binding domain"/>
    <property type="match status" value="1"/>
</dbReference>
<dbReference type="Gene3D" id="3.40.50.300">
    <property type="entry name" value="P-loop containing nucleotide triphosphate hydrolases"/>
    <property type="match status" value="1"/>
</dbReference>
<dbReference type="HAMAP" id="MF_00328">
    <property type="entry name" value="Guanylate_kinase"/>
    <property type="match status" value="1"/>
</dbReference>
<dbReference type="InterPro" id="IPR008145">
    <property type="entry name" value="GK/Ca_channel_bsu"/>
</dbReference>
<dbReference type="InterPro" id="IPR008144">
    <property type="entry name" value="Guanylate_kin-like_dom"/>
</dbReference>
<dbReference type="InterPro" id="IPR017665">
    <property type="entry name" value="Guanylate_kinase"/>
</dbReference>
<dbReference type="InterPro" id="IPR020590">
    <property type="entry name" value="Guanylate_kinase_CS"/>
</dbReference>
<dbReference type="InterPro" id="IPR027417">
    <property type="entry name" value="P-loop_NTPase"/>
</dbReference>
<dbReference type="NCBIfam" id="TIGR03263">
    <property type="entry name" value="guanyl_kin"/>
    <property type="match status" value="1"/>
</dbReference>
<dbReference type="PANTHER" id="PTHR23117:SF13">
    <property type="entry name" value="GUANYLATE KINASE"/>
    <property type="match status" value="1"/>
</dbReference>
<dbReference type="PANTHER" id="PTHR23117">
    <property type="entry name" value="GUANYLATE KINASE-RELATED"/>
    <property type="match status" value="1"/>
</dbReference>
<dbReference type="Pfam" id="PF00625">
    <property type="entry name" value="Guanylate_kin"/>
    <property type="match status" value="1"/>
</dbReference>
<dbReference type="SMART" id="SM00072">
    <property type="entry name" value="GuKc"/>
    <property type="match status" value="1"/>
</dbReference>
<dbReference type="SUPFAM" id="SSF52540">
    <property type="entry name" value="P-loop containing nucleoside triphosphate hydrolases"/>
    <property type="match status" value="1"/>
</dbReference>
<dbReference type="PROSITE" id="PS00856">
    <property type="entry name" value="GUANYLATE_KINASE_1"/>
    <property type="match status" value="1"/>
</dbReference>
<dbReference type="PROSITE" id="PS50052">
    <property type="entry name" value="GUANYLATE_KINASE_2"/>
    <property type="match status" value="1"/>
</dbReference>
<protein>
    <recommendedName>
        <fullName evidence="1">Guanylate kinase</fullName>
        <ecNumber evidence="1">2.7.4.8</ecNumber>
    </recommendedName>
    <alternativeName>
        <fullName evidence="1">GMP kinase</fullName>
    </alternativeName>
</protein>
<evidence type="ECO:0000255" key="1">
    <source>
        <dbReference type="HAMAP-Rule" id="MF_00328"/>
    </source>
</evidence>
<name>KGUA_PROM9</name>